<organism>
    <name type="scientific">Mus musculus</name>
    <name type="common">Mouse</name>
    <dbReference type="NCBI Taxonomy" id="10090"/>
    <lineage>
        <taxon>Eukaryota</taxon>
        <taxon>Metazoa</taxon>
        <taxon>Chordata</taxon>
        <taxon>Craniata</taxon>
        <taxon>Vertebrata</taxon>
        <taxon>Euteleostomi</taxon>
        <taxon>Mammalia</taxon>
        <taxon>Eutheria</taxon>
        <taxon>Euarchontoglires</taxon>
        <taxon>Glires</taxon>
        <taxon>Rodentia</taxon>
        <taxon>Myomorpha</taxon>
        <taxon>Muroidea</taxon>
        <taxon>Muridae</taxon>
        <taxon>Murinae</taxon>
        <taxon>Mus</taxon>
        <taxon>Mus</taxon>
    </lineage>
</organism>
<feature type="signal peptide" evidence="5">
    <location>
        <begin position="1"/>
        <end position="26"/>
    </location>
</feature>
<feature type="chain" id="PRO_0000433355" description="Sodium/hydrogen exchanger 3">
    <location>
        <begin position="27"/>
        <end position="829"/>
    </location>
</feature>
<feature type="topological domain" description="Extracellular" evidence="8">
    <location>
        <begin position="27"/>
        <end position="46"/>
    </location>
</feature>
<feature type="transmembrane region" description="Helical; Name=1" evidence="3">
    <location>
        <begin position="47"/>
        <end position="69"/>
    </location>
</feature>
<feature type="topological domain" description="Cytoplasmic" evidence="8">
    <location>
        <begin position="70"/>
        <end position="77"/>
    </location>
</feature>
<feature type="transmembrane region" description="Helical; Name=2" evidence="3">
    <location>
        <begin position="78"/>
        <end position="97"/>
    </location>
</feature>
<feature type="topological domain" description="Extracellular" evidence="8">
    <location>
        <begin position="98"/>
        <end position="106"/>
    </location>
</feature>
<feature type="transmembrane region" description="Helical; Name=3" evidence="3">
    <location>
        <begin position="107"/>
        <end position="124"/>
    </location>
</feature>
<feature type="topological domain" description="Cytoplasmic" evidence="8">
    <location>
        <begin position="125"/>
        <end position="127"/>
    </location>
</feature>
<feature type="transmembrane region" description="Helical; Name=4" evidence="3">
    <location>
        <begin position="128"/>
        <end position="163"/>
    </location>
</feature>
<feature type="topological domain" description="Extracellular" evidence="8">
    <location>
        <begin position="164"/>
        <end position="176"/>
    </location>
</feature>
<feature type="transmembrane region" description="Helical; Name=5" evidence="3">
    <location>
        <begin position="177"/>
        <end position="198"/>
    </location>
</feature>
<feature type="topological domain" description="Cytoplasmic" evidence="8">
    <location>
        <begin position="199"/>
        <end position="200"/>
    </location>
</feature>
<feature type="transmembrane region" description="Helical; Name=6" evidence="3">
    <location>
        <begin position="201"/>
        <end position="232"/>
    </location>
</feature>
<feature type="topological domain" description="Extracellular" evidence="8">
    <location>
        <begin position="233"/>
        <end position="239"/>
    </location>
</feature>
<feature type="transmembrane region" description="Helical; Name=7" evidence="3">
    <location>
        <begin position="240"/>
        <end position="274"/>
    </location>
</feature>
<feature type="topological domain" description="Cytoplasmic" evidence="8">
    <location>
        <begin position="275"/>
        <end position="276"/>
    </location>
</feature>
<feature type="transmembrane region" description="Helical; Name=8" evidence="3">
    <location>
        <begin position="277"/>
        <end position="299"/>
    </location>
</feature>
<feature type="topological domain" description="Extracellular" evidence="8">
    <location>
        <begin position="300"/>
        <end position="301"/>
    </location>
</feature>
<feature type="transmembrane region" description="Helical; Name=9" evidence="3">
    <location>
        <begin position="302"/>
        <end position="318"/>
    </location>
</feature>
<feature type="topological domain" description="Cytoplasmic" evidence="8">
    <location>
        <begin position="319"/>
        <end position="325"/>
    </location>
</feature>
<feature type="transmembrane region" description="Helical; Name=10" evidence="3">
    <location>
        <begin position="326"/>
        <end position="354"/>
    </location>
</feature>
<feature type="topological domain" description="Extracellular" evidence="8">
    <location>
        <begin position="355"/>
        <end position="362"/>
    </location>
</feature>
<feature type="transmembrane region" description="Helical; Name=11" evidence="3">
    <location>
        <begin position="363"/>
        <end position="384"/>
    </location>
</feature>
<feature type="topological domain" description="Cytoplasmic" evidence="8">
    <location>
        <begin position="385"/>
        <end position="397"/>
    </location>
</feature>
<feature type="transmembrane region" description="Helical; Name=12" evidence="3">
    <location>
        <begin position="398"/>
        <end position="421"/>
    </location>
</feature>
<feature type="topological domain" description="Extracellular" evidence="8">
    <location>
        <begin position="422"/>
        <end position="428"/>
    </location>
</feature>
<feature type="transmembrane region" description="Helical; Name=13" evidence="3">
    <location>
        <begin position="429"/>
        <end position="462"/>
    </location>
</feature>
<feature type="topological domain" description="Cytoplasmic" evidence="8">
    <location>
        <begin position="463"/>
        <end position="829"/>
    </location>
</feature>
<feature type="region of interest" description="Interaction with EZR" evidence="1">
    <location>
        <begin position="571"/>
        <end position="585"/>
    </location>
</feature>
<feature type="region of interest" description="Interaction with NHERF4" evidence="1">
    <location>
        <begin position="586"/>
        <end position="663"/>
    </location>
</feature>
<feature type="region of interest" description="Interaction with AHCYL1" evidence="1">
    <location>
        <begin position="587"/>
        <end position="691"/>
    </location>
</feature>
<feature type="region of interest" description="Disordered" evidence="6">
    <location>
        <begin position="677"/>
        <end position="696"/>
    </location>
</feature>
<feature type="compositionally biased region" description="Basic residues" evidence="6">
    <location>
        <begin position="677"/>
        <end position="687"/>
    </location>
</feature>
<feature type="binding site" evidence="3">
    <location>
        <position position="133"/>
    </location>
    <ligand>
        <name>a 1,2-diacyl-sn-glycero-3-phospho-(1D-myo-inositol)</name>
        <dbReference type="ChEBI" id="CHEBI:57880"/>
    </ligand>
</feature>
<feature type="binding site" evidence="3">
    <location>
        <position position="136"/>
    </location>
    <ligand>
        <name>a 1,2-diacyl-sn-glycero-3-phospho-(1D-myo-inositol)</name>
        <dbReference type="ChEBI" id="CHEBI:57880"/>
    </ligand>
</feature>
<feature type="binding site" evidence="3">
    <location>
        <position position="137"/>
    </location>
    <ligand>
        <name>a 1,2-diacyl-sn-glycero-3-phospho-(1D-myo-inositol)</name>
        <dbReference type="ChEBI" id="CHEBI:57880"/>
    </ligand>
</feature>
<feature type="binding site" evidence="3">
    <location>
        <position position="393"/>
    </location>
    <ligand>
        <name>a 1,2-diacyl-sn-glycero-3-phospho-(1D-myo-inositol)</name>
        <dbReference type="ChEBI" id="CHEBI:57880"/>
    </ligand>
</feature>
<feature type="binding site" evidence="3">
    <location>
        <position position="492"/>
    </location>
    <ligand>
        <name>a 1,2-diacyl-sn-glycero-3-phospho-(1D-myo-inositol)</name>
        <dbReference type="ChEBI" id="CHEBI:57880"/>
    </ligand>
</feature>
<feature type="binding site" evidence="3">
    <location>
        <position position="493"/>
    </location>
    <ligand>
        <name>a 1,2-diacyl-sn-glycero-3-phospho-(1D-myo-inositol)</name>
        <dbReference type="ChEBI" id="CHEBI:57880"/>
    </ligand>
</feature>
<feature type="binding site" evidence="3">
    <location>
        <position position="495"/>
    </location>
    <ligand>
        <name>a 1,2-diacyl-sn-glycero-3-phospho-(1D-myo-inositol)</name>
        <dbReference type="ChEBI" id="CHEBI:57880"/>
    </ligand>
</feature>
<feature type="modified residue" description="Phosphoserine" evidence="2">
    <location>
        <position position="550"/>
    </location>
</feature>
<feature type="modified residue" description="Phosphoserine" evidence="2">
    <location>
        <position position="558"/>
    </location>
</feature>
<feature type="modified residue" description="Phosphoserine" evidence="10">
    <location>
        <position position="588"/>
    </location>
</feature>
<feature type="modified residue" description="Phosphoserine" evidence="2">
    <location>
        <position position="603"/>
    </location>
</feature>
<feature type="modified residue" description="Phosphoserine; by SGK1" evidence="1">
    <location>
        <position position="659"/>
    </location>
</feature>
<feature type="modified residue" description="Phosphoserine" evidence="1">
    <location>
        <position position="714"/>
    </location>
</feature>
<feature type="modified residue" description="Phosphoserine" evidence="10">
    <location>
        <position position="805"/>
    </location>
</feature>
<feature type="modified residue" description="Phosphoserine" evidence="10">
    <location>
        <position position="808"/>
    </location>
</feature>
<evidence type="ECO:0000250" key="1">
    <source>
        <dbReference type="UniProtKB" id="P26432"/>
    </source>
</evidence>
<evidence type="ECO:0000250" key="2">
    <source>
        <dbReference type="UniProtKB" id="P26433"/>
    </source>
</evidence>
<evidence type="ECO:0000250" key="3">
    <source>
        <dbReference type="UniProtKB" id="P48764"/>
    </source>
</evidence>
<evidence type="ECO:0000250" key="4">
    <source>
        <dbReference type="UniProtKB" id="Q28362"/>
    </source>
</evidence>
<evidence type="ECO:0000255" key="5"/>
<evidence type="ECO:0000256" key="6">
    <source>
        <dbReference type="SAM" id="MobiDB-lite"/>
    </source>
</evidence>
<evidence type="ECO:0000269" key="7">
    <source>
    </source>
</evidence>
<evidence type="ECO:0000305" key="8"/>
<evidence type="ECO:0000312" key="9">
    <source>
        <dbReference type="MGI" id="MGI:105064"/>
    </source>
</evidence>
<evidence type="ECO:0007744" key="10">
    <source>
    </source>
</evidence>
<keyword id="KW-0050">Antiport</keyword>
<keyword id="KW-1003">Cell membrane</keyword>
<keyword id="KW-0967">Endosome</keyword>
<keyword id="KW-0406">Ion transport</keyword>
<keyword id="KW-0472">Membrane</keyword>
<keyword id="KW-0597">Phosphoprotein</keyword>
<keyword id="KW-1185">Reference proteome</keyword>
<keyword id="KW-0732">Signal</keyword>
<keyword id="KW-0915">Sodium</keyword>
<keyword id="KW-0739">Sodium transport</keyword>
<keyword id="KW-0812">Transmembrane</keyword>
<keyword id="KW-1133">Transmembrane helix</keyword>
<keyword id="KW-0813">Transport</keyword>
<gene>
    <name evidence="9" type="primary">Slc9a3</name>
</gene>
<reference key="1">
    <citation type="journal article" date="2005" name="Science">
        <title>The transcriptional landscape of the mammalian genome.</title>
        <authorList>
            <person name="Carninci P."/>
            <person name="Kasukawa T."/>
            <person name="Katayama S."/>
            <person name="Gough J."/>
            <person name="Frith M.C."/>
            <person name="Maeda N."/>
            <person name="Oyama R."/>
            <person name="Ravasi T."/>
            <person name="Lenhard B."/>
            <person name="Wells C."/>
            <person name="Kodzius R."/>
            <person name="Shimokawa K."/>
            <person name="Bajic V.B."/>
            <person name="Brenner S.E."/>
            <person name="Batalov S."/>
            <person name="Forrest A.R."/>
            <person name="Zavolan M."/>
            <person name="Davis M.J."/>
            <person name="Wilming L.G."/>
            <person name="Aidinis V."/>
            <person name="Allen J.E."/>
            <person name="Ambesi-Impiombato A."/>
            <person name="Apweiler R."/>
            <person name="Aturaliya R.N."/>
            <person name="Bailey T.L."/>
            <person name="Bansal M."/>
            <person name="Baxter L."/>
            <person name="Beisel K.W."/>
            <person name="Bersano T."/>
            <person name="Bono H."/>
            <person name="Chalk A.M."/>
            <person name="Chiu K.P."/>
            <person name="Choudhary V."/>
            <person name="Christoffels A."/>
            <person name="Clutterbuck D.R."/>
            <person name="Crowe M.L."/>
            <person name="Dalla E."/>
            <person name="Dalrymple B.P."/>
            <person name="de Bono B."/>
            <person name="Della Gatta G."/>
            <person name="di Bernardo D."/>
            <person name="Down T."/>
            <person name="Engstrom P."/>
            <person name="Fagiolini M."/>
            <person name="Faulkner G."/>
            <person name="Fletcher C.F."/>
            <person name="Fukushima T."/>
            <person name="Furuno M."/>
            <person name="Futaki S."/>
            <person name="Gariboldi M."/>
            <person name="Georgii-Hemming P."/>
            <person name="Gingeras T.R."/>
            <person name="Gojobori T."/>
            <person name="Green R.E."/>
            <person name="Gustincich S."/>
            <person name="Harbers M."/>
            <person name="Hayashi Y."/>
            <person name="Hensch T.K."/>
            <person name="Hirokawa N."/>
            <person name="Hill D."/>
            <person name="Huminiecki L."/>
            <person name="Iacono M."/>
            <person name="Ikeo K."/>
            <person name="Iwama A."/>
            <person name="Ishikawa T."/>
            <person name="Jakt M."/>
            <person name="Kanapin A."/>
            <person name="Katoh M."/>
            <person name="Kawasawa Y."/>
            <person name="Kelso J."/>
            <person name="Kitamura H."/>
            <person name="Kitano H."/>
            <person name="Kollias G."/>
            <person name="Krishnan S.P."/>
            <person name="Kruger A."/>
            <person name="Kummerfeld S.K."/>
            <person name="Kurochkin I.V."/>
            <person name="Lareau L.F."/>
            <person name="Lazarevic D."/>
            <person name="Lipovich L."/>
            <person name="Liu J."/>
            <person name="Liuni S."/>
            <person name="McWilliam S."/>
            <person name="Madan Babu M."/>
            <person name="Madera M."/>
            <person name="Marchionni L."/>
            <person name="Matsuda H."/>
            <person name="Matsuzawa S."/>
            <person name="Miki H."/>
            <person name="Mignone F."/>
            <person name="Miyake S."/>
            <person name="Morris K."/>
            <person name="Mottagui-Tabar S."/>
            <person name="Mulder N."/>
            <person name="Nakano N."/>
            <person name="Nakauchi H."/>
            <person name="Ng P."/>
            <person name="Nilsson R."/>
            <person name="Nishiguchi S."/>
            <person name="Nishikawa S."/>
            <person name="Nori F."/>
            <person name="Ohara O."/>
            <person name="Okazaki Y."/>
            <person name="Orlando V."/>
            <person name="Pang K.C."/>
            <person name="Pavan W.J."/>
            <person name="Pavesi G."/>
            <person name="Pesole G."/>
            <person name="Petrovsky N."/>
            <person name="Piazza S."/>
            <person name="Reed J."/>
            <person name="Reid J.F."/>
            <person name="Ring B.Z."/>
            <person name="Ringwald M."/>
            <person name="Rost B."/>
            <person name="Ruan Y."/>
            <person name="Salzberg S.L."/>
            <person name="Sandelin A."/>
            <person name="Schneider C."/>
            <person name="Schoenbach C."/>
            <person name="Sekiguchi K."/>
            <person name="Semple C.A."/>
            <person name="Seno S."/>
            <person name="Sessa L."/>
            <person name="Sheng Y."/>
            <person name="Shibata Y."/>
            <person name="Shimada H."/>
            <person name="Shimada K."/>
            <person name="Silva D."/>
            <person name="Sinclair B."/>
            <person name="Sperling S."/>
            <person name="Stupka E."/>
            <person name="Sugiura K."/>
            <person name="Sultana R."/>
            <person name="Takenaka Y."/>
            <person name="Taki K."/>
            <person name="Tammoja K."/>
            <person name="Tan S.L."/>
            <person name="Tang S."/>
            <person name="Taylor M.S."/>
            <person name="Tegner J."/>
            <person name="Teichmann S.A."/>
            <person name="Ueda H.R."/>
            <person name="van Nimwegen E."/>
            <person name="Verardo R."/>
            <person name="Wei C.L."/>
            <person name="Yagi K."/>
            <person name="Yamanishi H."/>
            <person name="Zabarovsky E."/>
            <person name="Zhu S."/>
            <person name="Zimmer A."/>
            <person name="Hide W."/>
            <person name="Bult C."/>
            <person name="Grimmond S.M."/>
            <person name="Teasdale R.D."/>
            <person name="Liu E.T."/>
            <person name="Brusic V."/>
            <person name="Quackenbush J."/>
            <person name="Wahlestedt C."/>
            <person name="Mattick J.S."/>
            <person name="Hume D.A."/>
            <person name="Kai C."/>
            <person name="Sasaki D."/>
            <person name="Tomaru Y."/>
            <person name="Fukuda S."/>
            <person name="Kanamori-Katayama M."/>
            <person name="Suzuki M."/>
            <person name="Aoki J."/>
            <person name="Arakawa T."/>
            <person name="Iida J."/>
            <person name="Imamura K."/>
            <person name="Itoh M."/>
            <person name="Kato T."/>
            <person name="Kawaji H."/>
            <person name="Kawagashira N."/>
            <person name="Kawashima T."/>
            <person name="Kojima M."/>
            <person name="Kondo S."/>
            <person name="Konno H."/>
            <person name="Nakano K."/>
            <person name="Ninomiya N."/>
            <person name="Nishio T."/>
            <person name="Okada M."/>
            <person name="Plessy C."/>
            <person name="Shibata K."/>
            <person name="Shiraki T."/>
            <person name="Suzuki S."/>
            <person name="Tagami M."/>
            <person name="Waki K."/>
            <person name="Watahiki A."/>
            <person name="Okamura-Oho Y."/>
            <person name="Suzuki H."/>
            <person name="Kawai J."/>
            <person name="Hayashizaki Y."/>
        </authorList>
    </citation>
    <scope>NUCLEOTIDE SEQUENCE [LARGE SCALE MRNA]</scope>
    <source>
        <strain>C57BL/6J</strain>
        <tissue>Colon</tissue>
    </source>
</reference>
<reference key="2">
    <citation type="journal article" date="2009" name="PLoS Biol.">
        <title>Lineage-specific biology revealed by a finished genome assembly of the mouse.</title>
        <authorList>
            <person name="Church D.M."/>
            <person name="Goodstadt L."/>
            <person name="Hillier L.W."/>
            <person name="Zody M.C."/>
            <person name="Goldstein S."/>
            <person name="She X."/>
            <person name="Bult C.J."/>
            <person name="Agarwala R."/>
            <person name="Cherry J.L."/>
            <person name="DiCuccio M."/>
            <person name="Hlavina W."/>
            <person name="Kapustin Y."/>
            <person name="Meric P."/>
            <person name="Maglott D."/>
            <person name="Birtle Z."/>
            <person name="Marques A.C."/>
            <person name="Graves T."/>
            <person name="Zhou S."/>
            <person name="Teague B."/>
            <person name="Potamousis K."/>
            <person name="Churas C."/>
            <person name="Place M."/>
            <person name="Herschleb J."/>
            <person name="Runnheim R."/>
            <person name="Forrest D."/>
            <person name="Amos-Landgraf J."/>
            <person name="Schwartz D.C."/>
            <person name="Cheng Z."/>
            <person name="Lindblad-Toh K."/>
            <person name="Eichler E.E."/>
            <person name="Ponting C.P."/>
        </authorList>
    </citation>
    <scope>NUCLEOTIDE SEQUENCE [LARGE SCALE GENOMIC DNA]</scope>
    <source>
        <strain>C57BL/6J</strain>
    </source>
</reference>
<reference key="3">
    <citation type="submission" date="2005-07" db="EMBL/GenBank/DDBJ databases">
        <authorList>
            <person name="Mural R.J."/>
            <person name="Adams M.D."/>
            <person name="Myers E.W."/>
            <person name="Smith H.O."/>
            <person name="Venter J.C."/>
        </authorList>
    </citation>
    <scope>NUCLEOTIDE SEQUENCE [LARGE SCALE GENOMIC DNA]</scope>
</reference>
<reference key="4">
    <citation type="journal article" date="2010" name="Cell">
        <title>A tissue-specific atlas of mouse protein phosphorylation and expression.</title>
        <authorList>
            <person name="Huttlin E.L."/>
            <person name="Jedrychowski M.P."/>
            <person name="Elias J.E."/>
            <person name="Goswami T."/>
            <person name="Rad R."/>
            <person name="Beausoleil S.A."/>
            <person name="Villen J."/>
            <person name="Haas W."/>
            <person name="Sowa M.E."/>
            <person name="Gygi S.P."/>
        </authorList>
    </citation>
    <scope>PHOSPHORYLATION [LARGE SCALE ANALYSIS] AT SER-588; SER-805 AND SER-808</scope>
    <scope>IDENTIFICATION BY MASS SPECTROMETRY [LARGE SCALE ANALYSIS]</scope>
    <source>
        <tissue>Kidney</tissue>
    </source>
</reference>
<reference key="5">
    <citation type="journal article" date="1998" name="Nat. Genet.">
        <title>Renal and intestinal absorptive defects in mice lacking the NHE3 Na+/H+ exchanger.</title>
        <authorList>
            <person name="Schultheis P.J."/>
            <person name="Clarke L.L."/>
            <person name="Meneton P."/>
            <person name="Miller M.L."/>
            <person name="Soleimani M."/>
            <person name="Gawenis L.R."/>
            <person name="Riddle T.M."/>
            <person name="Duffy J.J."/>
            <person name="Doetschman T."/>
            <person name="Wang T."/>
            <person name="Giebisch G."/>
            <person name="Aronson P.S."/>
            <person name="Lorenz J.N."/>
            <person name="Shull G.E."/>
        </authorList>
    </citation>
    <scope>DISRUPTION PHENOTYPE</scope>
    <scope>FUNCTION</scope>
</reference>
<comment type="function">
    <text evidence="3 7">Plasma membrane Na(+)/H(+) antiporter. Exchanges intracellular H(+) ions for extracellular Na(+) in 1:1 stoichiometry, playing a key role in salt and fluid absorption and pH homeostasis (By similarity). Major apical Na(+)/H(+) exchanger in kidney and intestine playing an important role in renal and intestine Na(+) absorption and blood pressure regulation (PubMed:9662405).</text>
</comment>
<comment type="catalytic activity">
    <reaction evidence="3">
        <text>Na(+)(in) + H(+)(out) = Na(+)(out) + H(+)(in)</text>
        <dbReference type="Rhea" id="RHEA:29419"/>
        <dbReference type="ChEBI" id="CHEBI:15378"/>
        <dbReference type="ChEBI" id="CHEBI:29101"/>
    </reaction>
</comment>
<comment type="activity regulation">
    <text evidence="1 3">Seems to switch between active and inactive modes in response to various stimuli (By similarity). Activated directly or indirectly by membrane phosphatidylinositol (PIs) (By similarity). Regulated by a variety of auxiliary proteins, which facilitate the maturation, cell surface expression and function of the transporter. Inhibited specifically by the drug tenapanor (By similarity).</text>
</comment>
<comment type="subunit">
    <text evidence="1 2 3 4">Homodimer (By similarity). Found in the forms of complex and dynamic macromolecular complexes (By similarity). Binds NHERF1 and NHERF2 (By similarity). Interacts with CHP1; this interaction increases trafficking and activity of SLC9A3 at the plasma membrane (By similarity). Interacts with CHP2 and SHANK2. Interacts with PDZK1 (via C-terminal PDZ domain) (By similarity). Interacts with NHERF4 and interactions decrease in response to elevated calcium ion levels (By similarity). Interacts with AHCYL1; the interaction is required for SLC9A3 activity (By similarity). Interacts with EZR; interaction targets SLC9A3 to the apical membrane (By similarity). Interacts with SNX27 (via PDZ domains); directs SLC9A3 membrane insertion from early endosomes to the plasma membrane (By similarity).</text>
</comment>
<comment type="subcellular location">
    <subcellularLocation>
        <location evidence="3">Apical cell membrane</location>
        <topology evidence="3">Multi-pass membrane protein</topology>
    </subcellularLocation>
    <subcellularLocation>
        <location evidence="3">Cell membrane</location>
        <topology evidence="3">Multi-pass membrane protein</topology>
    </subcellularLocation>
    <subcellularLocation>
        <location evidence="3">Recycling endosome membrane</location>
        <topology evidence="3">Multi-pass membrane protein</topology>
    </subcellularLocation>
    <subcellularLocation>
        <location evidence="3">Early endosome membrane</location>
        <topology evidence="3">Multi-pass membrane protein</topology>
    </subcellularLocation>
    <text evidence="4">In intestinal epithelial cells, localizes to the ileal brush border. Phosphorylation at Ser-663 by SGK1 is associated with increased abundance at the cell membrane. Angiotensin-2 enhances apical expression (By similarity).</text>
</comment>
<comment type="domain">
    <text evidence="3">The C-terminal intracellular domain is subject to extensive post-translational modifications and binding partner interactions which regulate transporter activity, scaffolding functions, downstream events and localization.</text>
</comment>
<comment type="PTM">
    <text evidence="1 2">Phosphorylated by PKA, which inhibits activity. Phosphorylation at Ser-659 by SGK1 is associated with increased abundance at the cell membrane. Phosphorylation at Ser-714 by CSNK2A1 regulates SLC9A3 activity through the formation of multiple signaling complexes (By similarity).</text>
</comment>
<comment type="disruption phenotype">
    <text evidence="7">Deficient mice have diarrhea associated with proximal tubular acidosis and hypotension. Males are infertile.</text>
</comment>
<comment type="similarity">
    <text evidence="8">Belongs to the monovalent cation:proton antiporter 1 (CPA1) transporter (TC 2.A.36) family.</text>
</comment>
<name>SL9A3_MOUSE</name>
<proteinExistence type="evidence at protein level"/>
<accession>G3X939</accession>
<accession>Q8BZU0</accession>
<protein>
    <recommendedName>
        <fullName evidence="8">Sodium/hydrogen exchanger 3</fullName>
    </recommendedName>
</protein>
<dbReference type="EMBL" id="AK033564">
    <property type="protein sequence ID" value="BAC28362.1"/>
    <property type="molecule type" value="mRNA"/>
</dbReference>
<dbReference type="EMBL" id="AC154839">
    <property type="status" value="NOT_ANNOTATED_CDS"/>
    <property type="molecule type" value="Genomic_DNA"/>
</dbReference>
<dbReference type="EMBL" id="CH466563">
    <property type="protein sequence ID" value="EDL37085.1"/>
    <property type="molecule type" value="Genomic_DNA"/>
</dbReference>
<dbReference type="CCDS" id="CCDS36731.1"/>
<dbReference type="RefSeq" id="NP_001074529.1">
    <property type="nucleotide sequence ID" value="NM_001081060.3"/>
</dbReference>
<dbReference type="RefSeq" id="XP_006517085.1">
    <property type="nucleotide sequence ID" value="XM_006517022.5"/>
</dbReference>
<dbReference type="SMR" id="G3X939"/>
<dbReference type="CORUM" id="G3X939"/>
<dbReference type="FunCoup" id="G3X939">
    <property type="interactions" value="138"/>
</dbReference>
<dbReference type="STRING" id="10090.ENSMUSP00000038142"/>
<dbReference type="GlyCosmos" id="G3X939">
    <property type="glycosylation" value="1 site, No reported glycans"/>
</dbReference>
<dbReference type="iPTMnet" id="G3X939"/>
<dbReference type="PhosphoSitePlus" id="G3X939"/>
<dbReference type="jPOST" id="G3X939"/>
<dbReference type="PaxDb" id="10090-ENSMUSP00000038142"/>
<dbReference type="PeptideAtlas" id="G3X939"/>
<dbReference type="ProteomicsDB" id="257252"/>
<dbReference type="Antibodypedia" id="22241">
    <property type="antibodies" value="332 antibodies from 26 providers"/>
</dbReference>
<dbReference type="DNASU" id="105243"/>
<dbReference type="Ensembl" id="ENSMUST00000036208.7">
    <property type="protein sequence ID" value="ENSMUSP00000038142.7"/>
    <property type="gene ID" value="ENSMUSG00000036123.9"/>
</dbReference>
<dbReference type="Ensembl" id="ENSMUST00000221703.2">
    <property type="protein sequence ID" value="ENSMUSP00000152682.2"/>
    <property type="gene ID" value="ENSMUSG00000036123.9"/>
</dbReference>
<dbReference type="GeneID" id="105243"/>
<dbReference type="KEGG" id="mmu:105243"/>
<dbReference type="UCSC" id="uc007res.2">
    <property type="organism name" value="mouse"/>
</dbReference>
<dbReference type="UCSC" id="uc007ret.1">
    <property type="organism name" value="mouse"/>
</dbReference>
<dbReference type="AGR" id="MGI:105064"/>
<dbReference type="CTD" id="6550"/>
<dbReference type="MGI" id="MGI:105064">
    <property type="gene designation" value="Slc9a3"/>
</dbReference>
<dbReference type="VEuPathDB" id="HostDB:ENSMUSG00000036123"/>
<dbReference type="eggNOG" id="KOG1966">
    <property type="taxonomic scope" value="Eukaryota"/>
</dbReference>
<dbReference type="GeneTree" id="ENSGT00940000158616"/>
<dbReference type="HOGENOM" id="CLU_005912_4_2_1"/>
<dbReference type="InParanoid" id="G3X939"/>
<dbReference type="OMA" id="NPEIWTW"/>
<dbReference type="OrthoDB" id="196264at2759"/>
<dbReference type="PhylomeDB" id="G3X939"/>
<dbReference type="TreeFam" id="TF317212"/>
<dbReference type="Reactome" id="R-MMU-425986">
    <property type="pathway name" value="Sodium/Proton exchangers"/>
</dbReference>
<dbReference type="BioGRID-ORCS" id="105243">
    <property type="hits" value="1 hit in 77 CRISPR screens"/>
</dbReference>
<dbReference type="PRO" id="PR:G3X939"/>
<dbReference type="Proteomes" id="UP000000589">
    <property type="component" value="Chromosome 13"/>
</dbReference>
<dbReference type="RNAct" id="G3X939">
    <property type="molecule type" value="protein"/>
</dbReference>
<dbReference type="Bgee" id="ENSMUSG00000036123">
    <property type="expression patterns" value="Expressed in small intestine Peyer's patch and 84 other cell types or tissues"/>
</dbReference>
<dbReference type="ExpressionAtlas" id="G3X939">
    <property type="expression patterns" value="baseline and differential"/>
</dbReference>
<dbReference type="GO" id="GO:0016324">
    <property type="term" value="C:apical plasma membrane"/>
    <property type="evidence" value="ECO:0000314"/>
    <property type="project" value="MGI"/>
</dbReference>
<dbReference type="GO" id="GO:0031526">
    <property type="term" value="C:brush border membrane"/>
    <property type="evidence" value="ECO:0000314"/>
    <property type="project" value="UniProtKB"/>
</dbReference>
<dbReference type="GO" id="GO:0031901">
    <property type="term" value="C:early endosome membrane"/>
    <property type="evidence" value="ECO:0007669"/>
    <property type="project" value="UniProtKB-SubCell"/>
</dbReference>
<dbReference type="GO" id="GO:0005886">
    <property type="term" value="C:plasma membrane"/>
    <property type="evidence" value="ECO:0000314"/>
    <property type="project" value="UniProtKB"/>
</dbReference>
<dbReference type="GO" id="GO:0055038">
    <property type="term" value="C:recycling endosome membrane"/>
    <property type="evidence" value="ECO:0007669"/>
    <property type="project" value="UniProtKB-SubCell"/>
</dbReference>
<dbReference type="GO" id="GO:0031982">
    <property type="term" value="C:vesicle"/>
    <property type="evidence" value="ECO:0000314"/>
    <property type="project" value="MGI"/>
</dbReference>
<dbReference type="GO" id="GO:0042802">
    <property type="term" value="F:identical protein binding"/>
    <property type="evidence" value="ECO:0000250"/>
    <property type="project" value="UniProtKB"/>
</dbReference>
<dbReference type="GO" id="GO:0030165">
    <property type="term" value="F:PDZ domain binding"/>
    <property type="evidence" value="ECO:0000314"/>
    <property type="project" value="UniProtKB"/>
</dbReference>
<dbReference type="GO" id="GO:0035091">
    <property type="term" value="F:phosphatidylinositol binding"/>
    <property type="evidence" value="ECO:0000250"/>
    <property type="project" value="UniProtKB"/>
</dbReference>
<dbReference type="GO" id="GO:0015385">
    <property type="term" value="F:sodium:proton antiporter activity"/>
    <property type="evidence" value="ECO:0000314"/>
    <property type="project" value="MGI"/>
</dbReference>
<dbReference type="GO" id="GO:0006885">
    <property type="term" value="P:regulation of pH"/>
    <property type="evidence" value="ECO:0000314"/>
    <property type="project" value="MGI"/>
</dbReference>
<dbReference type="GO" id="GO:0098719">
    <property type="term" value="P:sodium ion import across plasma membrane"/>
    <property type="evidence" value="ECO:0000250"/>
    <property type="project" value="UniProtKB"/>
</dbReference>
<dbReference type="GO" id="GO:0006814">
    <property type="term" value="P:sodium ion transport"/>
    <property type="evidence" value="ECO:0000314"/>
    <property type="project" value="MGI"/>
</dbReference>
<dbReference type="Gene3D" id="6.10.140.1330">
    <property type="match status" value="1"/>
</dbReference>
<dbReference type="InterPro" id="IPR018422">
    <property type="entry name" value="Cation/H_exchanger_CPA1"/>
</dbReference>
<dbReference type="InterPro" id="IPR006153">
    <property type="entry name" value="Cation/H_exchanger_TM"/>
</dbReference>
<dbReference type="InterPro" id="IPR018410">
    <property type="entry name" value="Na/H_exchanger_3/5"/>
</dbReference>
<dbReference type="InterPro" id="IPR004709">
    <property type="entry name" value="NaH_exchanger"/>
</dbReference>
<dbReference type="InterPro" id="IPR011256">
    <property type="entry name" value="Reg_factor_effector_dom_sf"/>
</dbReference>
<dbReference type="NCBIfam" id="TIGR00840">
    <property type="entry name" value="b_cpa1"/>
    <property type="match status" value="1"/>
</dbReference>
<dbReference type="PANTHER" id="PTHR10110">
    <property type="entry name" value="SODIUM/HYDROGEN EXCHANGER"/>
    <property type="match status" value="1"/>
</dbReference>
<dbReference type="PANTHER" id="PTHR10110:SF90">
    <property type="entry name" value="SODIUM_HYDROGEN EXCHANGER 3"/>
    <property type="match status" value="1"/>
</dbReference>
<dbReference type="Pfam" id="PF00999">
    <property type="entry name" value="Na_H_Exchanger"/>
    <property type="match status" value="1"/>
</dbReference>
<dbReference type="PRINTS" id="PR01084">
    <property type="entry name" value="NAHEXCHNGR"/>
</dbReference>
<dbReference type="PRINTS" id="PR01087">
    <property type="entry name" value="NAHEXCHNGR3"/>
</dbReference>
<dbReference type="SUPFAM" id="SSF55136">
    <property type="entry name" value="Probable bacterial effector-binding domain"/>
    <property type="match status" value="1"/>
</dbReference>
<sequence length="829" mass="93104">MWHRALGPGWKLLLALALTSLQGARGAEEEPSSDGSFQVVTFKWHHVQDPYIIALWILVASLAKIVFHLSHKVTSIVPESALLIVLGLVLGGIVWAADHIASFTLTPTLFFFYLLPPIVLDAGYFMPNRLFFGNLGTILLYAVIGTIWNAATTGLSLYGVFLSGLMGELKIGLLDFLLFGSLIAAVDPVAVLAVFEEVHVNEVLFIIVFGESLLNDAVTVVLYNVFESFVTLGGDAVTGVDCVKGIVSFFVVSLGGTLVGVIFAFLLSLVTRFTKHVRIIEPGFVFVISYLSYLTSEMLSLSSILAITFCGICCQKYVKANISEQSATTVRYTMKMLASGAETIIFMFLGISAVNPDIWTWNTAFVLLTLVFISVYRAIGVVLQTWILNRYRMVQLETIDQVVMSYGGLRGAVAYALVVLLDEKKVKEKNLFVSTTLIVVFFTVIFQGLTIKPLVQWLKVKRSEHREPKLNEKLHGRAFDHILSAIEDISGQIGHNYLRDKWSNFDRKFLSKVLMRRSAQKSRDRILNVFHELNLKDAISYVAEGERRGSLAFIRSPSTDNMVNVDFNTPRPSTVEASVSYFLRENVSAVCLDMQSLEQRRRSIRDTEDMVTHHTLQQYLYKPRQEYKHLYSRHELTPNEDEKQDKEIFHRTMRKRLESFKSAKLGINQNKKAAKLYKRERAQKRRNSSIPNGKLPMENLAHNYTIKEKDLELSEHEEATNYEEISGGIEFLASVTQDVASDSGAGIDNPVFSPDEDLDPSILSRVPPWLSPGETVVPSQRARVQIPNSPSNFRRLTPFRLSNKSVDSFLQADGHEEQLQPAAPESTHM</sequence>